<dbReference type="EC" id="3.6.5.n1" evidence="1"/>
<dbReference type="EMBL" id="L43967">
    <property type="protein sequence ID" value="AAC71355.1"/>
    <property type="molecule type" value="Genomic_DNA"/>
</dbReference>
<dbReference type="EMBL" id="X61521">
    <property type="protein sequence ID" value="CAB97511.1"/>
    <property type="molecule type" value="Genomic_DNA"/>
</dbReference>
<dbReference type="EMBL" id="U01745">
    <property type="protein sequence ID" value="AAD10558.1"/>
    <property type="molecule type" value="Genomic_DNA"/>
</dbReference>
<dbReference type="EMBL" id="U02133">
    <property type="protein sequence ID" value="AAD12410.1"/>
    <property type="molecule type" value="Genomic_DNA"/>
</dbReference>
<dbReference type="PIR" id="C64215">
    <property type="entry name" value="C64215"/>
</dbReference>
<dbReference type="RefSeq" id="WP_010869350.1">
    <property type="nucleotide sequence ID" value="NC_000908.2"/>
</dbReference>
<dbReference type="SMR" id="P47384"/>
<dbReference type="FunCoup" id="P47384">
    <property type="interactions" value="190"/>
</dbReference>
<dbReference type="STRING" id="243273.MG_138"/>
<dbReference type="GeneID" id="88282263"/>
<dbReference type="KEGG" id="mge:MG_138"/>
<dbReference type="eggNOG" id="COG0481">
    <property type="taxonomic scope" value="Bacteria"/>
</dbReference>
<dbReference type="HOGENOM" id="CLU_009995_3_3_14"/>
<dbReference type="InParanoid" id="P47384"/>
<dbReference type="OrthoDB" id="9804431at2"/>
<dbReference type="BioCyc" id="MGEN243273:G1GJ2-152-MONOMER"/>
<dbReference type="Proteomes" id="UP000000807">
    <property type="component" value="Chromosome"/>
</dbReference>
<dbReference type="GO" id="GO:0005886">
    <property type="term" value="C:plasma membrane"/>
    <property type="evidence" value="ECO:0007669"/>
    <property type="project" value="UniProtKB-SubCell"/>
</dbReference>
<dbReference type="GO" id="GO:0005525">
    <property type="term" value="F:GTP binding"/>
    <property type="evidence" value="ECO:0007669"/>
    <property type="project" value="UniProtKB-UniRule"/>
</dbReference>
<dbReference type="GO" id="GO:0003924">
    <property type="term" value="F:GTPase activity"/>
    <property type="evidence" value="ECO:0007669"/>
    <property type="project" value="UniProtKB-UniRule"/>
</dbReference>
<dbReference type="GO" id="GO:0043022">
    <property type="term" value="F:ribosome binding"/>
    <property type="evidence" value="ECO:0000318"/>
    <property type="project" value="GO_Central"/>
</dbReference>
<dbReference type="GO" id="GO:0003746">
    <property type="term" value="F:translation elongation factor activity"/>
    <property type="evidence" value="ECO:0007669"/>
    <property type="project" value="UniProtKB-UniRule"/>
</dbReference>
<dbReference type="GO" id="GO:0045727">
    <property type="term" value="P:positive regulation of translation"/>
    <property type="evidence" value="ECO:0000318"/>
    <property type="project" value="GO_Central"/>
</dbReference>
<dbReference type="CDD" id="cd03699">
    <property type="entry name" value="EF4_II"/>
    <property type="match status" value="1"/>
</dbReference>
<dbReference type="CDD" id="cd16260">
    <property type="entry name" value="EF4_III"/>
    <property type="match status" value="1"/>
</dbReference>
<dbReference type="CDD" id="cd01890">
    <property type="entry name" value="LepA"/>
    <property type="match status" value="1"/>
</dbReference>
<dbReference type="CDD" id="cd03709">
    <property type="entry name" value="lepA_C"/>
    <property type="match status" value="1"/>
</dbReference>
<dbReference type="FunFam" id="3.40.50.300:FF:000078">
    <property type="entry name" value="Elongation factor 4"/>
    <property type="match status" value="1"/>
</dbReference>
<dbReference type="FunFam" id="2.40.30.10:FF:000015">
    <property type="entry name" value="Translation factor GUF1, mitochondrial"/>
    <property type="match status" value="1"/>
</dbReference>
<dbReference type="FunFam" id="3.30.70.240:FF:000007">
    <property type="entry name" value="Translation factor GUF1, mitochondrial"/>
    <property type="match status" value="1"/>
</dbReference>
<dbReference type="FunFam" id="3.30.70.2570:FF:000001">
    <property type="entry name" value="Translation factor GUF1, mitochondrial"/>
    <property type="match status" value="1"/>
</dbReference>
<dbReference type="FunFam" id="3.30.70.870:FF:000004">
    <property type="entry name" value="Translation factor GUF1, mitochondrial"/>
    <property type="match status" value="1"/>
</dbReference>
<dbReference type="Gene3D" id="3.30.70.240">
    <property type="match status" value="1"/>
</dbReference>
<dbReference type="Gene3D" id="3.30.70.2570">
    <property type="entry name" value="Elongation factor 4, C-terminal domain"/>
    <property type="match status" value="1"/>
</dbReference>
<dbReference type="Gene3D" id="3.30.70.870">
    <property type="entry name" value="Elongation Factor G (Translational Gtpase), domain 3"/>
    <property type="match status" value="1"/>
</dbReference>
<dbReference type="Gene3D" id="3.40.50.300">
    <property type="entry name" value="P-loop containing nucleotide triphosphate hydrolases"/>
    <property type="match status" value="1"/>
</dbReference>
<dbReference type="Gene3D" id="2.40.30.10">
    <property type="entry name" value="Translation factors"/>
    <property type="match status" value="1"/>
</dbReference>
<dbReference type="HAMAP" id="MF_00071">
    <property type="entry name" value="LepA"/>
    <property type="match status" value="1"/>
</dbReference>
<dbReference type="InterPro" id="IPR006297">
    <property type="entry name" value="EF-4"/>
</dbReference>
<dbReference type="InterPro" id="IPR035647">
    <property type="entry name" value="EFG_III/V"/>
</dbReference>
<dbReference type="InterPro" id="IPR000640">
    <property type="entry name" value="EFG_V-like"/>
</dbReference>
<dbReference type="InterPro" id="IPR004161">
    <property type="entry name" value="EFTu-like_2"/>
</dbReference>
<dbReference type="InterPro" id="IPR031157">
    <property type="entry name" value="G_TR_CS"/>
</dbReference>
<dbReference type="InterPro" id="IPR038363">
    <property type="entry name" value="LepA_C_sf"/>
</dbReference>
<dbReference type="InterPro" id="IPR013842">
    <property type="entry name" value="LepA_CTD"/>
</dbReference>
<dbReference type="InterPro" id="IPR035654">
    <property type="entry name" value="LepA_IV"/>
</dbReference>
<dbReference type="InterPro" id="IPR027417">
    <property type="entry name" value="P-loop_NTPase"/>
</dbReference>
<dbReference type="InterPro" id="IPR005225">
    <property type="entry name" value="Small_GTP-bd"/>
</dbReference>
<dbReference type="InterPro" id="IPR000795">
    <property type="entry name" value="T_Tr_GTP-bd_dom"/>
</dbReference>
<dbReference type="InterPro" id="IPR009000">
    <property type="entry name" value="Transl_B-barrel_sf"/>
</dbReference>
<dbReference type="NCBIfam" id="TIGR01393">
    <property type="entry name" value="lepA"/>
    <property type="match status" value="1"/>
</dbReference>
<dbReference type="NCBIfam" id="TIGR00231">
    <property type="entry name" value="small_GTP"/>
    <property type="match status" value="1"/>
</dbReference>
<dbReference type="PANTHER" id="PTHR43512:SF4">
    <property type="entry name" value="TRANSLATION FACTOR GUF1 HOMOLOG, CHLOROPLASTIC"/>
    <property type="match status" value="1"/>
</dbReference>
<dbReference type="PANTHER" id="PTHR43512">
    <property type="entry name" value="TRANSLATION FACTOR GUF1-RELATED"/>
    <property type="match status" value="1"/>
</dbReference>
<dbReference type="Pfam" id="PF00679">
    <property type="entry name" value="EFG_C"/>
    <property type="match status" value="1"/>
</dbReference>
<dbReference type="Pfam" id="PF00009">
    <property type="entry name" value="GTP_EFTU"/>
    <property type="match status" value="1"/>
</dbReference>
<dbReference type="Pfam" id="PF03144">
    <property type="entry name" value="GTP_EFTU_D2"/>
    <property type="match status" value="1"/>
</dbReference>
<dbReference type="Pfam" id="PF06421">
    <property type="entry name" value="LepA_C"/>
    <property type="match status" value="1"/>
</dbReference>
<dbReference type="PRINTS" id="PR00315">
    <property type="entry name" value="ELONGATNFCT"/>
</dbReference>
<dbReference type="SMART" id="SM00838">
    <property type="entry name" value="EFG_C"/>
    <property type="match status" value="1"/>
</dbReference>
<dbReference type="SUPFAM" id="SSF54980">
    <property type="entry name" value="EF-G C-terminal domain-like"/>
    <property type="match status" value="2"/>
</dbReference>
<dbReference type="SUPFAM" id="SSF52540">
    <property type="entry name" value="P-loop containing nucleoside triphosphate hydrolases"/>
    <property type="match status" value="1"/>
</dbReference>
<dbReference type="SUPFAM" id="SSF50447">
    <property type="entry name" value="Translation proteins"/>
    <property type="match status" value="1"/>
</dbReference>
<dbReference type="PROSITE" id="PS00301">
    <property type="entry name" value="G_TR_1"/>
    <property type="match status" value="1"/>
</dbReference>
<dbReference type="PROSITE" id="PS51722">
    <property type="entry name" value="G_TR_2"/>
    <property type="match status" value="1"/>
</dbReference>
<keyword id="KW-1003">Cell membrane</keyword>
<keyword id="KW-0342">GTP-binding</keyword>
<keyword id="KW-0378">Hydrolase</keyword>
<keyword id="KW-0472">Membrane</keyword>
<keyword id="KW-0547">Nucleotide-binding</keyword>
<keyword id="KW-0648">Protein biosynthesis</keyword>
<keyword id="KW-1185">Reference proteome</keyword>
<proteinExistence type="inferred from homology"/>
<sequence length="598" mass="67937">MEQKNIRNFSIIAHIDHGKSTLSDRLLEHSLGFEKRLLQAQMLDTMEIERERGITIKLNAVELKINVDNNNYLFHLIDTPGHVDFTYEVSRSLAACEGVLLLVDATQGIQAQTISNAYLALENNLEIIPVINKIDMDNADIETTKDSLHNLLGVEKNSICLVSAKANLGIDQLIQTIIAKIPPPKGEINRPLKALLFDSYYDPYKGVVCFIRVFDGCLKVNDKVRFIKSNSVYQIVELGVKTPFFEKRDQLQAGDVGWFSAGIKKLRDVGVGDTIVSFDDQFTKPLAGYKKILPMIYCGLYPVDNSDYQNLKLAMEKIIISDAALEYEYETSQALGFGVRCGFLGLLHMDVIKERLEREYNLKLISAPPSVVYKVLLTNGKEISIDNPSLLPERSKIKAISEPFVKVFIDLPDQYLGSVIDLCQNFRGQYESLNEIDINRKRICYLMPLGEIIYSFFDKLKSISKGYASLNYEFYNYQHSQLEKVEIMLNKQKIDALSFISHKDFAFKRAKKFCTKLKELIPKHLFEIPIQATIGSKVIARETIKAVRKDVIAKLYGGDVSRKKKLLEKQKEGKKRLKAVGSVQLPQELFSHLLKDED</sequence>
<name>LEPA_MYCGE</name>
<evidence type="ECO:0000255" key="1">
    <source>
        <dbReference type="HAMAP-Rule" id="MF_00071"/>
    </source>
</evidence>
<evidence type="ECO:0000305" key="2"/>
<comment type="function">
    <text evidence="1">Required for accurate and efficient protein synthesis under certain stress conditions. May act as a fidelity factor of the translation reaction, by catalyzing a one-codon backward translocation of tRNAs on improperly translocated ribosomes. Back-translocation proceeds from a post-translocation (POST) complex to a pre-translocation (PRE) complex, thus giving elongation factor G a second chance to translocate the tRNAs correctly. Binds to ribosomes in a GTP-dependent manner.</text>
</comment>
<comment type="catalytic activity">
    <reaction evidence="1">
        <text>GTP + H2O = GDP + phosphate + H(+)</text>
        <dbReference type="Rhea" id="RHEA:19669"/>
        <dbReference type="ChEBI" id="CHEBI:15377"/>
        <dbReference type="ChEBI" id="CHEBI:15378"/>
        <dbReference type="ChEBI" id="CHEBI:37565"/>
        <dbReference type="ChEBI" id="CHEBI:43474"/>
        <dbReference type="ChEBI" id="CHEBI:58189"/>
        <dbReference type="EC" id="3.6.5.n1"/>
    </reaction>
</comment>
<comment type="subcellular location">
    <subcellularLocation>
        <location evidence="1">Cell membrane</location>
        <topology evidence="1">Peripheral membrane protein</topology>
        <orientation evidence="1">Cytoplasmic side</orientation>
    </subcellularLocation>
</comment>
<comment type="similarity">
    <text evidence="1">Belongs to the TRAFAC class translation factor GTPase superfamily. Classic translation factor GTPase family. LepA subfamily.</text>
</comment>
<organism>
    <name type="scientific">Mycoplasma genitalium (strain ATCC 33530 / DSM 19775 / NCTC 10195 / G37)</name>
    <name type="common">Mycoplasmoides genitalium</name>
    <dbReference type="NCBI Taxonomy" id="243273"/>
    <lineage>
        <taxon>Bacteria</taxon>
        <taxon>Bacillati</taxon>
        <taxon>Mycoplasmatota</taxon>
        <taxon>Mycoplasmoidales</taxon>
        <taxon>Mycoplasmoidaceae</taxon>
        <taxon>Mycoplasmoides</taxon>
    </lineage>
</organism>
<feature type="chain" id="PRO_0000176298" description="Elongation factor 4">
    <location>
        <begin position="1"/>
        <end position="598"/>
    </location>
</feature>
<feature type="domain" description="tr-type G">
    <location>
        <begin position="4"/>
        <end position="185"/>
    </location>
</feature>
<feature type="binding site" evidence="1">
    <location>
        <begin position="16"/>
        <end position="21"/>
    </location>
    <ligand>
        <name>GTP</name>
        <dbReference type="ChEBI" id="CHEBI:37565"/>
    </ligand>
</feature>
<feature type="binding site" evidence="1">
    <location>
        <begin position="132"/>
        <end position="135"/>
    </location>
    <ligand>
        <name>GTP</name>
        <dbReference type="ChEBI" id="CHEBI:37565"/>
    </ligand>
</feature>
<feature type="sequence conflict" description="In Ref. 3; AAD12410." evidence="2" ref="3">
    <original>D</original>
    <variation>G</variation>
    <location>
        <position position="413"/>
    </location>
</feature>
<accession>P47384</accession>
<accession>Q49264</accession>
<accession>Q49477</accession>
<gene>
    <name evidence="1" type="primary">lepA</name>
    <name type="ordered locus">MG138</name>
</gene>
<protein>
    <recommendedName>
        <fullName evidence="1">Elongation factor 4</fullName>
        <shortName evidence="1">EF-4</shortName>
        <ecNumber evidence="1">3.6.5.n1</ecNumber>
    </recommendedName>
    <alternativeName>
        <fullName evidence="1">Ribosomal back-translocase LepA</fullName>
    </alternativeName>
</protein>
<reference key="1">
    <citation type="journal article" date="1995" name="Science">
        <title>The minimal gene complement of Mycoplasma genitalium.</title>
        <authorList>
            <person name="Fraser C.M."/>
            <person name="Gocayne J.D."/>
            <person name="White O."/>
            <person name="Adams M.D."/>
            <person name="Clayton R.A."/>
            <person name="Fleischmann R.D."/>
            <person name="Bult C.J."/>
            <person name="Kerlavage A.R."/>
            <person name="Sutton G.G."/>
            <person name="Kelley J.M."/>
            <person name="Fritchman J.L."/>
            <person name="Weidman J.F."/>
            <person name="Small K.V."/>
            <person name="Sandusky M."/>
            <person name="Fuhrmann J.L."/>
            <person name="Nguyen D.T."/>
            <person name="Utterback T.R."/>
            <person name="Saudek D.M."/>
            <person name="Phillips C.A."/>
            <person name="Merrick J.M."/>
            <person name="Tomb J.-F."/>
            <person name="Dougherty B.A."/>
            <person name="Bott K.F."/>
            <person name="Hu P.-C."/>
            <person name="Lucier T.S."/>
            <person name="Peterson S.N."/>
            <person name="Smith H.O."/>
            <person name="Hutchison C.A. III"/>
            <person name="Venter J.C."/>
        </authorList>
    </citation>
    <scope>NUCLEOTIDE SEQUENCE [LARGE SCALE GENOMIC DNA]</scope>
    <source>
        <strain>ATCC 33530 / DSM 19775 / NCTC 10195 / G37</strain>
    </source>
</reference>
<reference key="2">
    <citation type="journal article" date="1991" name="Nucleic Acids Res.">
        <title>A random sequencing approach for placing markers on the physical map of Mycoplasma genitalium.</title>
        <authorList>
            <person name="Peterson S.N."/>
            <person name="Schramm N."/>
            <person name="Hu P.-C."/>
            <person name="Bott K.F."/>
            <person name="Hutchison C.A. III"/>
        </authorList>
    </citation>
    <scope>NUCLEOTIDE SEQUENCE [GENOMIC DNA] OF 109-197</scope>
    <source>
        <strain>ATCC 33530 / DSM 19775 / NCTC 10195 / G37</strain>
    </source>
</reference>
<reference key="3">
    <citation type="journal article" date="1993" name="J. Bacteriol.">
        <title>A survey of the Mycoplasma genitalium genome by using random sequencing.</title>
        <authorList>
            <person name="Peterson S.N."/>
            <person name="Hu P.-C."/>
            <person name="Bott K.F."/>
            <person name="Hutchison C.A. III"/>
        </authorList>
    </citation>
    <scope>NUCLEOTIDE SEQUENCE [GENOMIC DNA] OF 314-413 AND 440-598</scope>
    <source>
        <strain>ATCC 33530 / DSM 19775 / NCTC 10195 / G37</strain>
    </source>
</reference>